<sequence length="61" mass="8456">MARYRHSRSRSRSXYRRRXRRRSRYRSRRRRYRGRRRRRSRRGRRRGYSRRRYSRRRRRRY</sequence>
<evidence type="ECO:0000256" key="1">
    <source>
        <dbReference type="SAM" id="MobiDB-lite"/>
    </source>
</evidence>
<evidence type="ECO:0000305" key="2"/>
<accession>Q9GLQ3</accession>
<organism>
    <name type="scientific">Onychogalea fraenata</name>
    <name type="common">Bridled nail-tailed wallaby</name>
    <dbReference type="NCBI Taxonomy" id="114227"/>
    <lineage>
        <taxon>Eukaryota</taxon>
        <taxon>Metazoa</taxon>
        <taxon>Chordata</taxon>
        <taxon>Craniata</taxon>
        <taxon>Vertebrata</taxon>
        <taxon>Euteleostomi</taxon>
        <taxon>Mammalia</taxon>
        <taxon>Metatheria</taxon>
        <taxon>Diprotodontia</taxon>
        <taxon>Macropodidae</taxon>
        <taxon>Onychogalea</taxon>
    </lineage>
</organism>
<name>HSP1_ONCFR</name>
<proteinExistence type="evidence at transcript level"/>
<dbReference type="EMBL" id="AF187542">
    <property type="protein sequence ID" value="AAG27959.1"/>
    <property type="molecule type" value="Genomic_DNA"/>
</dbReference>
<dbReference type="GO" id="GO:0000786">
    <property type="term" value="C:nucleosome"/>
    <property type="evidence" value="ECO:0007669"/>
    <property type="project" value="UniProtKB-KW"/>
</dbReference>
<dbReference type="GO" id="GO:0005634">
    <property type="term" value="C:nucleus"/>
    <property type="evidence" value="ECO:0007669"/>
    <property type="project" value="UniProtKB-SubCell"/>
</dbReference>
<dbReference type="GO" id="GO:0003677">
    <property type="term" value="F:DNA binding"/>
    <property type="evidence" value="ECO:0007669"/>
    <property type="project" value="UniProtKB-KW"/>
</dbReference>
<dbReference type="GO" id="GO:0030261">
    <property type="term" value="P:chromosome condensation"/>
    <property type="evidence" value="ECO:0007669"/>
    <property type="project" value="UniProtKB-KW"/>
</dbReference>
<dbReference type="GO" id="GO:0035092">
    <property type="term" value="P:sperm DNA condensation"/>
    <property type="evidence" value="ECO:0007669"/>
    <property type="project" value="InterPro"/>
</dbReference>
<dbReference type="InterPro" id="IPR000221">
    <property type="entry name" value="Protamine_P1"/>
</dbReference>
<dbReference type="PROSITE" id="PS00048">
    <property type="entry name" value="PROTAMINE_P1"/>
    <property type="match status" value="1"/>
</dbReference>
<comment type="function">
    <text>Protamines substitute for histones in the chromatin of sperm during the haploid phase of spermatogenesis. They compact sperm DNA into a highly condensed, stable and inactive complex.</text>
</comment>
<comment type="subcellular location">
    <subcellularLocation>
        <location>Nucleus</location>
    </subcellularLocation>
    <subcellularLocation>
        <location>Chromosome</location>
    </subcellularLocation>
</comment>
<comment type="tissue specificity">
    <text>Testis.</text>
</comment>
<comment type="similarity">
    <text evidence="2">Belongs to the protamine P1 family.</text>
</comment>
<protein>
    <recommendedName>
        <fullName>Sperm protamine P1</fullName>
    </recommendedName>
</protein>
<feature type="chain" id="PRO_0000191514" description="Sperm protamine P1">
    <location>
        <begin position="1"/>
        <end position="61"/>
    </location>
</feature>
<feature type="region of interest" description="Disordered" evidence="1">
    <location>
        <begin position="1"/>
        <end position="61"/>
    </location>
</feature>
<reference key="1">
    <citation type="journal article" date="2000" name="J. Mammal. Evol.">
        <title>Intergeneric relationships among Macropodoidea (Metatheria: Diprotodontia) and the chronicle of kangaroo evolution.</title>
        <authorList>
            <person name="Burk A."/>
            <person name="Springer M.S."/>
        </authorList>
    </citation>
    <scope>NUCLEOTIDE SEQUENCE [GENOMIC DNA]</scope>
</reference>
<gene>
    <name type="primary">PRM1</name>
</gene>
<keyword id="KW-0158">Chromosome</keyword>
<keyword id="KW-0217">Developmental protein</keyword>
<keyword id="KW-0221">Differentiation</keyword>
<keyword id="KW-0226">DNA condensation</keyword>
<keyword id="KW-0238">DNA-binding</keyword>
<keyword id="KW-0544">Nucleosome core</keyword>
<keyword id="KW-0539">Nucleus</keyword>
<keyword id="KW-0744">Spermatogenesis</keyword>